<name>QUEC_STAHJ</name>
<proteinExistence type="inferred from homology"/>
<organism>
    <name type="scientific">Staphylococcus haemolyticus (strain JCSC1435)</name>
    <dbReference type="NCBI Taxonomy" id="279808"/>
    <lineage>
        <taxon>Bacteria</taxon>
        <taxon>Bacillati</taxon>
        <taxon>Bacillota</taxon>
        <taxon>Bacilli</taxon>
        <taxon>Bacillales</taxon>
        <taxon>Staphylococcaceae</taxon>
        <taxon>Staphylococcus</taxon>
    </lineage>
</organism>
<dbReference type="EC" id="6.3.4.20" evidence="1"/>
<dbReference type="EMBL" id="AP006716">
    <property type="protein sequence ID" value="BAE05495.1"/>
    <property type="molecule type" value="Genomic_DNA"/>
</dbReference>
<dbReference type="RefSeq" id="WP_011276447.1">
    <property type="nucleotide sequence ID" value="NC_007168.1"/>
</dbReference>
<dbReference type="SMR" id="Q4L4D0"/>
<dbReference type="GeneID" id="93781504"/>
<dbReference type="KEGG" id="sha:SH2186"/>
<dbReference type="eggNOG" id="COG0603">
    <property type="taxonomic scope" value="Bacteria"/>
</dbReference>
<dbReference type="HOGENOM" id="CLU_081854_0_0_9"/>
<dbReference type="OrthoDB" id="9789567at2"/>
<dbReference type="UniPathway" id="UPA00391"/>
<dbReference type="Proteomes" id="UP000000543">
    <property type="component" value="Chromosome"/>
</dbReference>
<dbReference type="GO" id="GO:0005524">
    <property type="term" value="F:ATP binding"/>
    <property type="evidence" value="ECO:0007669"/>
    <property type="project" value="UniProtKB-UniRule"/>
</dbReference>
<dbReference type="GO" id="GO:0016879">
    <property type="term" value="F:ligase activity, forming carbon-nitrogen bonds"/>
    <property type="evidence" value="ECO:0007669"/>
    <property type="project" value="UniProtKB-UniRule"/>
</dbReference>
<dbReference type="GO" id="GO:0008270">
    <property type="term" value="F:zinc ion binding"/>
    <property type="evidence" value="ECO:0007669"/>
    <property type="project" value="UniProtKB-UniRule"/>
</dbReference>
<dbReference type="GO" id="GO:0008616">
    <property type="term" value="P:queuosine biosynthetic process"/>
    <property type="evidence" value="ECO:0007669"/>
    <property type="project" value="UniProtKB-UniRule"/>
</dbReference>
<dbReference type="CDD" id="cd01995">
    <property type="entry name" value="QueC-like"/>
    <property type="match status" value="1"/>
</dbReference>
<dbReference type="FunFam" id="3.40.50.620:FF:000017">
    <property type="entry name" value="7-cyano-7-deazaguanine synthase"/>
    <property type="match status" value="1"/>
</dbReference>
<dbReference type="Gene3D" id="3.40.50.620">
    <property type="entry name" value="HUPs"/>
    <property type="match status" value="1"/>
</dbReference>
<dbReference type="HAMAP" id="MF_01633">
    <property type="entry name" value="QueC"/>
    <property type="match status" value="1"/>
</dbReference>
<dbReference type="InterPro" id="IPR018317">
    <property type="entry name" value="QueC"/>
</dbReference>
<dbReference type="InterPro" id="IPR014729">
    <property type="entry name" value="Rossmann-like_a/b/a_fold"/>
</dbReference>
<dbReference type="NCBIfam" id="TIGR00364">
    <property type="entry name" value="7-cyano-7-deazaguanine synthase QueC"/>
    <property type="match status" value="1"/>
</dbReference>
<dbReference type="PANTHER" id="PTHR42914">
    <property type="entry name" value="7-CYANO-7-DEAZAGUANINE SYNTHASE"/>
    <property type="match status" value="1"/>
</dbReference>
<dbReference type="PANTHER" id="PTHR42914:SF1">
    <property type="entry name" value="7-CYANO-7-DEAZAGUANINE SYNTHASE"/>
    <property type="match status" value="1"/>
</dbReference>
<dbReference type="Pfam" id="PF06508">
    <property type="entry name" value="QueC"/>
    <property type="match status" value="1"/>
</dbReference>
<dbReference type="PIRSF" id="PIRSF006293">
    <property type="entry name" value="ExsB"/>
    <property type="match status" value="1"/>
</dbReference>
<dbReference type="SUPFAM" id="SSF52402">
    <property type="entry name" value="Adenine nucleotide alpha hydrolases-like"/>
    <property type="match status" value="1"/>
</dbReference>
<accession>Q4L4D0</accession>
<feature type="chain" id="PRO_0000246939" description="7-cyano-7-deazaguanine synthase">
    <location>
        <begin position="1"/>
        <end position="223"/>
    </location>
</feature>
<feature type="binding site" evidence="1">
    <location>
        <begin position="15"/>
        <end position="25"/>
    </location>
    <ligand>
        <name>ATP</name>
        <dbReference type="ChEBI" id="CHEBI:30616"/>
    </ligand>
</feature>
<feature type="binding site" evidence="1">
    <location>
        <position position="191"/>
    </location>
    <ligand>
        <name>Zn(2+)</name>
        <dbReference type="ChEBI" id="CHEBI:29105"/>
    </ligand>
</feature>
<feature type="binding site" evidence="1">
    <location>
        <position position="200"/>
    </location>
    <ligand>
        <name>Zn(2+)</name>
        <dbReference type="ChEBI" id="CHEBI:29105"/>
    </ligand>
</feature>
<feature type="binding site" evidence="1">
    <location>
        <position position="203"/>
    </location>
    <ligand>
        <name>Zn(2+)</name>
        <dbReference type="ChEBI" id="CHEBI:29105"/>
    </ligand>
</feature>
<feature type="binding site" evidence="1">
    <location>
        <position position="206"/>
    </location>
    <ligand>
        <name>Zn(2+)</name>
        <dbReference type="ChEBI" id="CHEBI:29105"/>
    </ligand>
</feature>
<gene>
    <name evidence="1" type="primary">queC</name>
    <name type="ordered locus">SH2186</name>
</gene>
<protein>
    <recommendedName>
        <fullName evidence="1">7-cyano-7-deazaguanine synthase</fullName>
        <ecNumber evidence="1">6.3.4.20</ecNumber>
    </recommendedName>
    <alternativeName>
        <fullName evidence="1">7-cyano-7-carbaguanine synthase</fullName>
    </alternativeName>
    <alternativeName>
        <fullName evidence="1">PreQ(0) synthase</fullName>
    </alternativeName>
    <alternativeName>
        <fullName evidence="1">Queuosine biosynthesis protein QueC</fullName>
    </alternativeName>
</protein>
<keyword id="KW-0067">ATP-binding</keyword>
<keyword id="KW-0436">Ligase</keyword>
<keyword id="KW-0479">Metal-binding</keyword>
<keyword id="KW-0547">Nucleotide-binding</keyword>
<keyword id="KW-0671">Queuosine biosynthesis</keyword>
<keyword id="KW-0862">Zinc</keyword>
<reference key="1">
    <citation type="journal article" date="2005" name="J. Bacteriol.">
        <title>Whole-genome sequencing of Staphylococcus haemolyticus uncovers the extreme plasticity of its genome and the evolution of human-colonizing staphylococcal species.</title>
        <authorList>
            <person name="Takeuchi F."/>
            <person name="Watanabe S."/>
            <person name="Baba T."/>
            <person name="Yuzawa H."/>
            <person name="Ito T."/>
            <person name="Morimoto Y."/>
            <person name="Kuroda M."/>
            <person name="Cui L."/>
            <person name="Takahashi M."/>
            <person name="Ankai A."/>
            <person name="Baba S."/>
            <person name="Fukui S."/>
            <person name="Lee J.C."/>
            <person name="Hiramatsu K."/>
        </authorList>
    </citation>
    <scope>NUCLEOTIDE SEQUENCE [LARGE SCALE GENOMIC DNA]</scope>
    <source>
        <strain>JCSC1435</strain>
    </source>
</reference>
<evidence type="ECO:0000255" key="1">
    <source>
        <dbReference type="HAMAP-Rule" id="MF_01633"/>
    </source>
</evidence>
<comment type="function">
    <text evidence="1">Catalyzes the ATP-dependent conversion of 7-carboxy-7-deazaguanine (CDG) to 7-cyano-7-deazaguanine (preQ(0)).</text>
</comment>
<comment type="catalytic activity">
    <reaction evidence="1">
        <text>7-carboxy-7-deazaguanine + NH4(+) + ATP = 7-cyano-7-deazaguanine + ADP + phosphate + H2O + H(+)</text>
        <dbReference type="Rhea" id="RHEA:27982"/>
        <dbReference type="ChEBI" id="CHEBI:15377"/>
        <dbReference type="ChEBI" id="CHEBI:15378"/>
        <dbReference type="ChEBI" id="CHEBI:28938"/>
        <dbReference type="ChEBI" id="CHEBI:30616"/>
        <dbReference type="ChEBI" id="CHEBI:43474"/>
        <dbReference type="ChEBI" id="CHEBI:45075"/>
        <dbReference type="ChEBI" id="CHEBI:61036"/>
        <dbReference type="ChEBI" id="CHEBI:456216"/>
        <dbReference type="EC" id="6.3.4.20"/>
    </reaction>
</comment>
<comment type="cofactor">
    <cofactor evidence="1">
        <name>Zn(2+)</name>
        <dbReference type="ChEBI" id="CHEBI:29105"/>
    </cofactor>
    <text evidence="1">Binds 1 zinc ion per subunit.</text>
</comment>
<comment type="pathway">
    <text evidence="1">Purine metabolism; 7-cyano-7-deazaguanine biosynthesis.</text>
</comment>
<comment type="subunit">
    <text evidence="1">Homodimer.</text>
</comment>
<comment type="similarity">
    <text evidence="1">Belongs to the QueC family.</text>
</comment>
<sequence>MTNQNLNKDKAIVVFSGGQDSTTCLFYAKKHFKDVELVTFNYGQRHDAEIEVATRIAKEQNLKHHILDMSLLSQLTPNALTQHDMDIETGEDGIPNTFVPARNLLFLSFAGALAYQRNAKHIITGVCETDFSGYPDCRDSFIKSMNVTLSLSMDKDFVIHTPLMWLDKAQTWELSDELGVLDYIRHNTLTCYNGVIGDGCGECPACQLRQRGLQHYLEAKGAN</sequence>